<name>TRMFO_TRIV2</name>
<evidence type="ECO:0000255" key="1">
    <source>
        <dbReference type="HAMAP-Rule" id="MF_01037"/>
    </source>
</evidence>
<protein>
    <recommendedName>
        <fullName evidence="1">Methylenetetrahydrofolate--tRNA-(uracil-5-)-methyltransferase TrmFO</fullName>
        <ecNumber evidence="1">2.1.1.74</ecNumber>
    </recommendedName>
    <alternativeName>
        <fullName evidence="1">Folate-dependent tRNA (uracil-5-)-methyltransferase</fullName>
    </alternativeName>
    <alternativeName>
        <fullName evidence="1">Folate-dependent tRNA(M-5-U54)-methyltransferase</fullName>
    </alternativeName>
</protein>
<keyword id="KW-0963">Cytoplasm</keyword>
<keyword id="KW-0274">FAD</keyword>
<keyword id="KW-0285">Flavoprotein</keyword>
<keyword id="KW-0489">Methyltransferase</keyword>
<keyword id="KW-0520">NAD</keyword>
<keyword id="KW-0521">NADP</keyword>
<keyword id="KW-0808">Transferase</keyword>
<keyword id="KW-0819">tRNA processing</keyword>
<proteinExistence type="inferred from homology"/>
<feature type="chain" id="PRO_1000084282" description="Methylenetetrahydrofolate--tRNA-(uracil-5-)-methyltransferase TrmFO">
    <location>
        <begin position="1"/>
        <end position="438"/>
    </location>
</feature>
<feature type="binding site" evidence="1">
    <location>
        <begin position="10"/>
        <end position="15"/>
    </location>
    <ligand>
        <name>FAD</name>
        <dbReference type="ChEBI" id="CHEBI:57692"/>
    </ligand>
</feature>
<organism>
    <name type="scientific">Trichormus variabilis (strain ATCC 29413 / PCC 7937)</name>
    <name type="common">Anabaena variabilis</name>
    <dbReference type="NCBI Taxonomy" id="240292"/>
    <lineage>
        <taxon>Bacteria</taxon>
        <taxon>Bacillati</taxon>
        <taxon>Cyanobacteriota</taxon>
        <taxon>Cyanophyceae</taxon>
        <taxon>Nostocales</taxon>
        <taxon>Nostocaceae</taxon>
        <taxon>Trichormus</taxon>
    </lineage>
</organism>
<accession>Q3MA89</accession>
<comment type="function">
    <text evidence="1">Catalyzes the folate-dependent formation of 5-methyl-uridine at position 54 (M-5-U54) in all tRNAs.</text>
</comment>
<comment type="catalytic activity">
    <reaction evidence="1">
        <text>uridine(54) in tRNA + (6R)-5,10-methylene-5,6,7,8-tetrahydrofolate + NADH + H(+) = 5-methyluridine(54) in tRNA + (6S)-5,6,7,8-tetrahydrofolate + NAD(+)</text>
        <dbReference type="Rhea" id="RHEA:16873"/>
        <dbReference type="Rhea" id="RHEA-COMP:10167"/>
        <dbReference type="Rhea" id="RHEA-COMP:10193"/>
        <dbReference type="ChEBI" id="CHEBI:15378"/>
        <dbReference type="ChEBI" id="CHEBI:15636"/>
        <dbReference type="ChEBI" id="CHEBI:57453"/>
        <dbReference type="ChEBI" id="CHEBI:57540"/>
        <dbReference type="ChEBI" id="CHEBI:57945"/>
        <dbReference type="ChEBI" id="CHEBI:65315"/>
        <dbReference type="ChEBI" id="CHEBI:74447"/>
        <dbReference type="EC" id="2.1.1.74"/>
    </reaction>
</comment>
<comment type="catalytic activity">
    <reaction evidence="1">
        <text>uridine(54) in tRNA + (6R)-5,10-methylene-5,6,7,8-tetrahydrofolate + NADPH + H(+) = 5-methyluridine(54) in tRNA + (6S)-5,6,7,8-tetrahydrofolate + NADP(+)</text>
        <dbReference type="Rhea" id="RHEA:62372"/>
        <dbReference type="Rhea" id="RHEA-COMP:10167"/>
        <dbReference type="Rhea" id="RHEA-COMP:10193"/>
        <dbReference type="ChEBI" id="CHEBI:15378"/>
        <dbReference type="ChEBI" id="CHEBI:15636"/>
        <dbReference type="ChEBI" id="CHEBI:57453"/>
        <dbReference type="ChEBI" id="CHEBI:57783"/>
        <dbReference type="ChEBI" id="CHEBI:58349"/>
        <dbReference type="ChEBI" id="CHEBI:65315"/>
        <dbReference type="ChEBI" id="CHEBI:74447"/>
        <dbReference type="EC" id="2.1.1.74"/>
    </reaction>
</comment>
<comment type="cofactor">
    <cofactor evidence="1">
        <name>FAD</name>
        <dbReference type="ChEBI" id="CHEBI:57692"/>
    </cofactor>
</comment>
<comment type="subcellular location">
    <subcellularLocation>
        <location evidence="1">Cytoplasm</location>
    </subcellularLocation>
</comment>
<comment type="similarity">
    <text evidence="1">Belongs to the MnmG family. TrmFO subfamily.</text>
</comment>
<gene>
    <name evidence="1" type="primary">trmFO</name>
    <name type="synonym">gid</name>
    <name type="ordered locus">Ava_2482</name>
</gene>
<sequence>MDQQPIQVIGGGLAGTEAAWQIAQAGVPVILHEMRPKRFSPAHHTEHLAELVCSNSFGAMASDRAAGLLHEELRQLGSVVIAKADEHAVPAGGALAVDRGQFGQDLTQTLASHPLVEFRRSEVPAIPEGIVVLATGPLTSPDLAADLHRFTGMEYMSFFDAASPIIVGDSINRDIAFMASRYDKGEAAYLNCPMNKEQYLRFREELCKAEQTELKDFERETAKFFEACLPIEELAQRGEDTMRYGPVKPVGLSDSRTGERPYAVVQLRQEDKAGQLWNMVGFQTNLRWGEQKRVFQMIPGLEKAEFVRLGVMHRNTFINAPQLMLPTLQFKQRPTLLAAGQLIGTEGYTAAAAGGWLAGTNAARLALGKEPLALPPTTMLGALLEFISSASPKHFQPMPPNFGILPDLGMKIKSKPERYGRYRDRSLADLSSWKHNLN</sequence>
<reference key="1">
    <citation type="journal article" date="2014" name="Stand. Genomic Sci.">
        <title>Complete genome sequence of Anabaena variabilis ATCC 29413.</title>
        <authorList>
            <person name="Thiel T."/>
            <person name="Pratte B.S."/>
            <person name="Zhong J."/>
            <person name="Goodwin L."/>
            <person name="Copeland A."/>
            <person name="Lucas S."/>
            <person name="Han C."/>
            <person name="Pitluck S."/>
            <person name="Land M.L."/>
            <person name="Kyrpides N.C."/>
            <person name="Woyke T."/>
        </authorList>
    </citation>
    <scope>NUCLEOTIDE SEQUENCE [LARGE SCALE GENOMIC DNA]</scope>
    <source>
        <strain>ATCC 29413 / PCC 7937</strain>
    </source>
</reference>
<dbReference type="EC" id="2.1.1.74" evidence="1"/>
<dbReference type="EMBL" id="CP000117">
    <property type="protein sequence ID" value="ABA22097.1"/>
    <property type="molecule type" value="Genomic_DNA"/>
</dbReference>
<dbReference type="SMR" id="Q3MA89"/>
<dbReference type="STRING" id="240292.Ava_2482"/>
<dbReference type="KEGG" id="ava:Ava_2482"/>
<dbReference type="eggNOG" id="COG1206">
    <property type="taxonomic scope" value="Bacteria"/>
</dbReference>
<dbReference type="HOGENOM" id="CLU_033057_1_0_3"/>
<dbReference type="Proteomes" id="UP000002533">
    <property type="component" value="Chromosome"/>
</dbReference>
<dbReference type="GO" id="GO:0005829">
    <property type="term" value="C:cytosol"/>
    <property type="evidence" value="ECO:0007669"/>
    <property type="project" value="TreeGrafter"/>
</dbReference>
<dbReference type="GO" id="GO:0050660">
    <property type="term" value="F:flavin adenine dinucleotide binding"/>
    <property type="evidence" value="ECO:0007669"/>
    <property type="project" value="UniProtKB-UniRule"/>
</dbReference>
<dbReference type="GO" id="GO:0047151">
    <property type="term" value="F:tRNA (uracil(54)-C5)-methyltransferase activity, 5,10-methylenetetrahydrofolate-dependent"/>
    <property type="evidence" value="ECO:0007669"/>
    <property type="project" value="UniProtKB-UniRule"/>
</dbReference>
<dbReference type="GO" id="GO:0030488">
    <property type="term" value="P:tRNA methylation"/>
    <property type="evidence" value="ECO:0007669"/>
    <property type="project" value="TreeGrafter"/>
</dbReference>
<dbReference type="GO" id="GO:0002098">
    <property type="term" value="P:tRNA wobble uridine modification"/>
    <property type="evidence" value="ECO:0007669"/>
    <property type="project" value="TreeGrafter"/>
</dbReference>
<dbReference type="Gene3D" id="3.50.50.60">
    <property type="entry name" value="FAD/NAD(P)-binding domain"/>
    <property type="match status" value="2"/>
</dbReference>
<dbReference type="HAMAP" id="MF_01037">
    <property type="entry name" value="TrmFO"/>
    <property type="match status" value="1"/>
</dbReference>
<dbReference type="InterPro" id="IPR036188">
    <property type="entry name" value="FAD/NAD-bd_sf"/>
</dbReference>
<dbReference type="InterPro" id="IPR002218">
    <property type="entry name" value="MnmG-rel"/>
</dbReference>
<dbReference type="InterPro" id="IPR020595">
    <property type="entry name" value="MnmG-rel_CS"/>
</dbReference>
<dbReference type="InterPro" id="IPR040131">
    <property type="entry name" value="MnmG_N"/>
</dbReference>
<dbReference type="InterPro" id="IPR004417">
    <property type="entry name" value="TrmFO"/>
</dbReference>
<dbReference type="NCBIfam" id="TIGR00137">
    <property type="entry name" value="gid_trmFO"/>
    <property type="match status" value="1"/>
</dbReference>
<dbReference type="NCBIfam" id="NF003739">
    <property type="entry name" value="PRK05335.1"/>
    <property type="match status" value="1"/>
</dbReference>
<dbReference type="PANTHER" id="PTHR11806">
    <property type="entry name" value="GLUCOSE INHIBITED DIVISION PROTEIN A"/>
    <property type="match status" value="1"/>
</dbReference>
<dbReference type="PANTHER" id="PTHR11806:SF2">
    <property type="entry name" value="METHYLENETETRAHYDROFOLATE--TRNA-(URACIL-5-)-METHYLTRANSFERASE TRMFO"/>
    <property type="match status" value="1"/>
</dbReference>
<dbReference type="Pfam" id="PF01134">
    <property type="entry name" value="GIDA"/>
    <property type="match status" value="1"/>
</dbReference>
<dbReference type="SUPFAM" id="SSF51905">
    <property type="entry name" value="FAD/NAD(P)-binding domain"/>
    <property type="match status" value="1"/>
</dbReference>
<dbReference type="PROSITE" id="PS01281">
    <property type="entry name" value="GIDA_2"/>
    <property type="match status" value="1"/>
</dbReference>